<dbReference type="EMBL" id="DQ396875">
    <property type="protein sequence ID" value="ABD48250.1"/>
    <property type="molecule type" value="Genomic_DNA"/>
</dbReference>
<dbReference type="RefSeq" id="YP_635967.1">
    <property type="nucleotide sequence ID" value="NC_008101.1"/>
</dbReference>
<dbReference type="SMR" id="Q1KVV7"/>
<dbReference type="GeneID" id="4099750"/>
<dbReference type="GO" id="GO:0009507">
    <property type="term" value="C:chloroplast"/>
    <property type="evidence" value="ECO:0007669"/>
    <property type="project" value="UniProtKB-SubCell"/>
</dbReference>
<dbReference type="GO" id="GO:0005829">
    <property type="term" value="C:cytosol"/>
    <property type="evidence" value="ECO:0007669"/>
    <property type="project" value="TreeGrafter"/>
</dbReference>
<dbReference type="GO" id="GO:0043022">
    <property type="term" value="F:ribosome binding"/>
    <property type="evidence" value="ECO:0007669"/>
    <property type="project" value="UniProtKB-UniRule"/>
</dbReference>
<dbReference type="GO" id="GO:0019843">
    <property type="term" value="F:rRNA binding"/>
    <property type="evidence" value="ECO:0007669"/>
    <property type="project" value="UniProtKB-UniRule"/>
</dbReference>
<dbReference type="GO" id="GO:0003743">
    <property type="term" value="F:translation initiation factor activity"/>
    <property type="evidence" value="ECO:0007669"/>
    <property type="project" value="UniProtKB-UniRule"/>
</dbReference>
<dbReference type="CDD" id="cd04451">
    <property type="entry name" value="S1_IF1"/>
    <property type="match status" value="1"/>
</dbReference>
<dbReference type="FunFam" id="2.40.50.140:FF:000002">
    <property type="entry name" value="Translation initiation factor IF-1"/>
    <property type="match status" value="1"/>
</dbReference>
<dbReference type="Gene3D" id="2.40.50.140">
    <property type="entry name" value="Nucleic acid-binding proteins"/>
    <property type="match status" value="1"/>
</dbReference>
<dbReference type="HAMAP" id="MF_00075">
    <property type="entry name" value="IF_1"/>
    <property type="match status" value="1"/>
</dbReference>
<dbReference type="InterPro" id="IPR012340">
    <property type="entry name" value="NA-bd_OB-fold"/>
</dbReference>
<dbReference type="InterPro" id="IPR006196">
    <property type="entry name" value="RNA-binding_domain_S1_IF1"/>
</dbReference>
<dbReference type="InterPro" id="IPR004368">
    <property type="entry name" value="TIF_IF1"/>
</dbReference>
<dbReference type="NCBIfam" id="TIGR00008">
    <property type="entry name" value="infA"/>
    <property type="match status" value="1"/>
</dbReference>
<dbReference type="PANTHER" id="PTHR33370">
    <property type="entry name" value="TRANSLATION INITIATION FACTOR IF-1, CHLOROPLASTIC"/>
    <property type="match status" value="1"/>
</dbReference>
<dbReference type="PANTHER" id="PTHR33370:SF1">
    <property type="entry name" value="TRANSLATION INITIATION FACTOR IF-1, CHLOROPLASTIC"/>
    <property type="match status" value="1"/>
</dbReference>
<dbReference type="Pfam" id="PF01176">
    <property type="entry name" value="eIF-1a"/>
    <property type="match status" value="1"/>
</dbReference>
<dbReference type="SUPFAM" id="SSF50249">
    <property type="entry name" value="Nucleic acid-binding proteins"/>
    <property type="match status" value="1"/>
</dbReference>
<dbReference type="PROSITE" id="PS50832">
    <property type="entry name" value="S1_IF1_TYPE"/>
    <property type="match status" value="1"/>
</dbReference>
<organism>
    <name type="scientific">Tetradesmus obliquus</name>
    <name type="common">Green alga</name>
    <name type="synonym">Acutodesmus obliquus</name>
    <dbReference type="NCBI Taxonomy" id="3088"/>
    <lineage>
        <taxon>Eukaryota</taxon>
        <taxon>Viridiplantae</taxon>
        <taxon>Chlorophyta</taxon>
        <taxon>core chlorophytes</taxon>
        <taxon>Chlorophyceae</taxon>
        <taxon>CS clade</taxon>
        <taxon>Sphaeropleales</taxon>
        <taxon>Scenedesmaceae</taxon>
        <taxon>Tetradesmus</taxon>
    </lineage>
</organism>
<accession>Q1KVV7</accession>
<gene>
    <name evidence="1" type="primary">infA</name>
</gene>
<geneLocation type="chloroplast"/>
<name>IF1C_TETOB</name>
<comment type="function">
    <text evidence="1">One of the essential components for the initiation of protein synthesis. Stabilizes the binding of IF-2 and IF-3 on the 30S subunit to which N-formylmethionyl-tRNA(fMet) subsequently binds. Helps modulate mRNA selection, yielding the 30S pre-initiation complex (PIC). Upon addition of the 50S ribosomal subunit IF-1, IF-2 and IF-3 are released leaving the mature 70S translation initiation complex.</text>
</comment>
<comment type="subunit">
    <text evidence="1">Component of the 30S ribosomal translation pre-initiation complex which assembles on the 30S ribosome in the order IF-2 and IF-3, IF-1 and N-formylmethionyl-tRNA(fMet); mRNA recruitment can occur at any time during PIC assembly.</text>
</comment>
<comment type="subcellular location">
    <subcellularLocation>
        <location evidence="1">Plastid</location>
        <location evidence="1">Chloroplast</location>
    </subcellularLocation>
</comment>
<comment type="similarity">
    <text evidence="1">Belongs to the IF-1 family.</text>
</comment>
<protein>
    <recommendedName>
        <fullName evidence="1">Translation initiation factor IF-1, chloroplastic</fullName>
    </recommendedName>
</protein>
<proteinExistence type="inferred from homology"/>
<reference key="1">
    <citation type="journal article" date="2006" name="BMC Evol. Biol.">
        <title>The complete chloroplast genome sequence of the chlorophycean green alga Scenedesmus obliquus reveals a compact gene organization and a biased distribution of genes on the two DNA strands.</title>
        <authorList>
            <person name="de Cambiaire J.-C."/>
            <person name="Otis C."/>
            <person name="Lemieux C."/>
            <person name="Turmel M."/>
        </authorList>
    </citation>
    <scope>NUCLEOTIDE SEQUENCE [LARGE SCALE GENOMIC DNA]</scope>
    <source>
        <strain>UTEX 393</strain>
    </source>
</reference>
<feature type="chain" id="PRO_0000338969" description="Translation initiation factor IF-1, chloroplastic">
    <location>
        <begin position="1"/>
        <end position="101"/>
    </location>
</feature>
<feature type="domain" description="S1-like" evidence="1">
    <location>
        <begin position="26"/>
        <end position="101"/>
    </location>
</feature>
<feature type="region of interest" description="Disordered" evidence="2">
    <location>
        <begin position="1"/>
        <end position="35"/>
    </location>
</feature>
<feature type="compositionally biased region" description="Polar residues" evidence="2">
    <location>
        <begin position="1"/>
        <end position="10"/>
    </location>
</feature>
<keyword id="KW-0150">Chloroplast</keyword>
<keyword id="KW-0396">Initiation factor</keyword>
<keyword id="KW-0934">Plastid</keyword>
<keyword id="KW-0648">Protein biosynthesis</keyword>
<keyword id="KW-0694">RNA-binding</keyword>
<keyword id="KW-0699">rRNA-binding</keyword>
<evidence type="ECO:0000255" key="1">
    <source>
        <dbReference type="HAMAP-Rule" id="MF_00075"/>
    </source>
</evidence>
<evidence type="ECO:0000256" key="2">
    <source>
        <dbReference type="SAM" id="MobiDB-lite"/>
    </source>
</evidence>
<sequence length="101" mass="11609">MNQLKKSFSPTEGKKDQNNLINDPQKNKQKKQKKLVDMEGLVTHNLSNGKFRLKLENGVEVIGHLSGKIRQNRIKIVVGDKVTVELSPYDLTKGRITYRHR</sequence>